<sequence length="690" mass="77580">MEDTFQDSASEDGGFDLRQEIARSAFADMCHDWERNQKYDRALQLTIARLHAAGQQAHVLDIGTGSGLLSMMAIRAGADSVVACEAFRPMADCAELIIAANGMQDRIRLVKKRSTKVTVGPGQDMERRANVLVTELFDTELIGEGALGTYRHALQHLLTEDVLTIPHQATVYAQVVECPLALSWQQLKTLSNADGDILLRVPPEVATCRGSSAVFDIQLSQLPAGSFNVLTDPVPVFKFAWSKHQELINDRCEQSVCHARTAGFPQAVFMWWDLTMDREGDVLLSCAPYWAHPEHEALKKKHSDNGSKRRLPEGNYIPWRDHWMQAVYFLPPLKIPLQRGQQFVLQSYHDEFSLWFGVGEQSVKEPLTAPHCTCGWHIAQSRSRIGQLNDSLRNKRYLNYFERVFSSDSVVLVLSEGSLLGLAAARMGVKQVLLYEPNAISRRCMEAFVEHNSVANVRFLPSADALEPEQAATITHVFAEPHFPSAILPWDNLHYGDLLKNLRPLLPASVTVIPASGTLYALPVEFVDLYKINAPLGSCEGFDLTLMDQLIDQHSTFADSPVEAQPLWEYPSFPLAGTTRLIEINFVKDFEQSKLERGELFVSEPERLNGIAIWIDWHLDGSHSPKTTISSGPLVPVEESSDEPTRWNTNWRQGVHLLRKTPNRKGTIPWSVKFNPVLSNVYFRFDEEEQ</sequence>
<organism>
    <name type="scientific">Anopheles gambiae</name>
    <name type="common">African malaria mosquito</name>
    <dbReference type="NCBI Taxonomy" id="7165"/>
    <lineage>
        <taxon>Eukaryota</taxon>
        <taxon>Metazoa</taxon>
        <taxon>Ecdysozoa</taxon>
        <taxon>Arthropoda</taxon>
        <taxon>Hexapoda</taxon>
        <taxon>Insecta</taxon>
        <taxon>Pterygota</taxon>
        <taxon>Neoptera</taxon>
        <taxon>Endopterygota</taxon>
        <taxon>Diptera</taxon>
        <taxon>Nematocera</taxon>
        <taxon>Culicoidea</taxon>
        <taxon>Culicidae</taxon>
        <taxon>Anophelinae</taxon>
        <taxon>Anopheles</taxon>
    </lineage>
</organism>
<dbReference type="EC" id="2.1.1.-"/>
<dbReference type="EMBL" id="AAAB01008807">
    <property type="protein sequence ID" value="EAA04124.4"/>
    <property type="molecule type" value="Genomic_DNA"/>
</dbReference>
<dbReference type="RefSeq" id="XP_308819.4">
    <property type="nucleotide sequence ID" value="XM_308819.4"/>
</dbReference>
<dbReference type="SMR" id="Q7QIL2"/>
<dbReference type="FunCoup" id="Q7QIL2">
    <property type="interactions" value="2255"/>
</dbReference>
<dbReference type="STRING" id="7165.Q7QIL2"/>
<dbReference type="PaxDb" id="7165-AGAP006938-PA"/>
<dbReference type="EnsemblMetazoa" id="AGAP006938-RA">
    <property type="protein sequence ID" value="AGAP006938-PA"/>
    <property type="gene ID" value="AGAP006938"/>
</dbReference>
<dbReference type="GeneID" id="1270147"/>
<dbReference type="KEGG" id="aga:1270147"/>
<dbReference type="CTD" id="37664"/>
<dbReference type="VEuPathDB" id="VectorBase:AGAMI1_008268"/>
<dbReference type="VEuPathDB" id="VectorBase:AGAP006938"/>
<dbReference type="eggNOG" id="KOG1501">
    <property type="taxonomic scope" value="Eukaryota"/>
</dbReference>
<dbReference type="HOGENOM" id="CLU_015180_0_0_1"/>
<dbReference type="InParanoid" id="Q7QIL2"/>
<dbReference type="OMA" id="CHHDEYS"/>
<dbReference type="OrthoDB" id="412876at2759"/>
<dbReference type="PhylomeDB" id="Q7QIL2"/>
<dbReference type="Proteomes" id="UP000007062">
    <property type="component" value="Chromosome 2L"/>
</dbReference>
<dbReference type="GO" id="GO:0042054">
    <property type="term" value="F:histone methyltransferase activity"/>
    <property type="evidence" value="ECO:0000318"/>
    <property type="project" value="GO_Central"/>
</dbReference>
<dbReference type="GO" id="GO:0016274">
    <property type="term" value="F:protein-arginine N-methyltransferase activity"/>
    <property type="evidence" value="ECO:0000318"/>
    <property type="project" value="GO_Central"/>
</dbReference>
<dbReference type="GO" id="GO:0035243">
    <property type="term" value="F:protein-arginine omega-N symmetric methyltransferase activity"/>
    <property type="evidence" value="ECO:0000250"/>
    <property type="project" value="UniProtKB"/>
</dbReference>
<dbReference type="GO" id="GO:0006338">
    <property type="term" value="P:chromatin remodeling"/>
    <property type="evidence" value="ECO:0000318"/>
    <property type="project" value="GO_Central"/>
</dbReference>
<dbReference type="GO" id="GO:0018216">
    <property type="term" value="P:peptidyl-arginine methylation"/>
    <property type="evidence" value="ECO:0000250"/>
    <property type="project" value="UniProtKB"/>
</dbReference>
<dbReference type="GO" id="GO:0006355">
    <property type="term" value="P:regulation of DNA-templated transcription"/>
    <property type="evidence" value="ECO:0000318"/>
    <property type="project" value="GO_Central"/>
</dbReference>
<dbReference type="CDD" id="cd02440">
    <property type="entry name" value="AdoMet_MTases"/>
    <property type="match status" value="1"/>
</dbReference>
<dbReference type="FunFam" id="2.70.160.11:FF:000014">
    <property type="entry name" value="Protein arginine N-methyltransferase 7"/>
    <property type="match status" value="1"/>
</dbReference>
<dbReference type="FunFam" id="2.70.160.11:FF:000019">
    <property type="entry name" value="Protein arginine N-methyltransferase 7"/>
    <property type="match status" value="1"/>
</dbReference>
<dbReference type="FunFam" id="3.40.50.150:FF:000070">
    <property type="entry name" value="Protein arginine N-methyltransferase 7"/>
    <property type="match status" value="1"/>
</dbReference>
<dbReference type="FunFam" id="3.40.50.150:FF:000071">
    <property type="entry name" value="Protein arginine N-methyltransferase 7"/>
    <property type="match status" value="1"/>
</dbReference>
<dbReference type="Gene3D" id="2.70.160.11">
    <property type="entry name" value="Hnrnp arginine n-methyltransferase1"/>
    <property type="match status" value="2"/>
</dbReference>
<dbReference type="Gene3D" id="3.40.50.150">
    <property type="entry name" value="Vaccinia Virus protein VP39"/>
    <property type="match status" value="2"/>
</dbReference>
<dbReference type="InterPro" id="IPR025799">
    <property type="entry name" value="Arg_MeTrfase"/>
</dbReference>
<dbReference type="InterPro" id="IPR014644">
    <property type="entry name" value="MeTrfase_PRMT7"/>
</dbReference>
<dbReference type="InterPro" id="IPR055135">
    <property type="entry name" value="PRMT_dom"/>
</dbReference>
<dbReference type="InterPro" id="IPR029063">
    <property type="entry name" value="SAM-dependent_MTases_sf"/>
</dbReference>
<dbReference type="PANTHER" id="PTHR11006">
    <property type="entry name" value="PROTEIN ARGININE N-METHYLTRANSFERASE"/>
    <property type="match status" value="1"/>
</dbReference>
<dbReference type="PANTHER" id="PTHR11006:SF4">
    <property type="entry name" value="PROTEIN ARGININE N-METHYLTRANSFERASE 7"/>
    <property type="match status" value="1"/>
</dbReference>
<dbReference type="Pfam" id="PF06325">
    <property type="entry name" value="PrmA"/>
    <property type="match status" value="1"/>
</dbReference>
<dbReference type="Pfam" id="PF22528">
    <property type="entry name" value="PRMT_C"/>
    <property type="match status" value="1"/>
</dbReference>
<dbReference type="PIRSF" id="PIRSF036946">
    <property type="entry name" value="Arg_N-mtase"/>
    <property type="match status" value="1"/>
</dbReference>
<dbReference type="SUPFAM" id="SSF53335">
    <property type="entry name" value="S-adenosyl-L-methionine-dependent methyltransferases"/>
    <property type="match status" value="2"/>
</dbReference>
<dbReference type="PROSITE" id="PS51678">
    <property type="entry name" value="SAM_MT_PRMT"/>
    <property type="match status" value="2"/>
</dbReference>
<proteinExistence type="inferred from homology"/>
<name>ANM7_ANOGA</name>
<reference key="1">
    <citation type="journal article" date="2002" name="Science">
        <title>The genome sequence of the malaria mosquito Anopheles gambiae.</title>
        <authorList>
            <person name="Holt R.A."/>
            <person name="Subramanian G.M."/>
            <person name="Halpern A."/>
            <person name="Sutton G.G."/>
            <person name="Charlab R."/>
            <person name="Nusskern D.R."/>
            <person name="Wincker P."/>
            <person name="Clark A.G."/>
            <person name="Ribeiro J.M.C."/>
            <person name="Wides R."/>
            <person name="Salzberg S.L."/>
            <person name="Loftus B.J."/>
            <person name="Yandell M.D."/>
            <person name="Majoros W.H."/>
            <person name="Rusch D.B."/>
            <person name="Lai Z."/>
            <person name="Kraft C.L."/>
            <person name="Abril J.F."/>
            <person name="Anthouard V."/>
            <person name="Arensburger P."/>
            <person name="Atkinson P.W."/>
            <person name="Baden H."/>
            <person name="de Berardinis V."/>
            <person name="Baldwin D."/>
            <person name="Benes V."/>
            <person name="Biedler J."/>
            <person name="Blass C."/>
            <person name="Bolanos R."/>
            <person name="Boscus D."/>
            <person name="Barnstead M."/>
            <person name="Cai S."/>
            <person name="Center A."/>
            <person name="Chaturverdi K."/>
            <person name="Christophides G.K."/>
            <person name="Chrystal M.A.M."/>
            <person name="Clamp M."/>
            <person name="Cravchik A."/>
            <person name="Curwen V."/>
            <person name="Dana A."/>
            <person name="Delcher A."/>
            <person name="Dew I."/>
            <person name="Evans C.A."/>
            <person name="Flanigan M."/>
            <person name="Grundschober-Freimoser A."/>
            <person name="Friedli L."/>
            <person name="Gu Z."/>
            <person name="Guan P."/>
            <person name="Guigo R."/>
            <person name="Hillenmeyer M.E."/>
            <person name="Hladun S.L."/>
            <person name="Hogan J.R."/>
            <person name="Hong Y.S."/>
            <person name="Hoover J."/>
            <person name="Jaillon O."/>
            <person name="Ke Z."/>
            <person name="Kodira C.D."/>
            <person name="Kokoza E."/>
            <person name="Koutsos A."/>
            <person name="Letunic I."/>
            <person name="Levitsky A.A."/>
            <person name="Liang Y."/>
            <person name="Lin J.-J."/>
            <person name="Lobo N.F."/>
            <person name="Lopez J.R."/>
            <person name="Malek J.A."/>
            <person name="McIntosh T.C."/>
            <person name="Meister S."/>
            <person name="Miller J.R."/>
            <person name="Mobarry C."/>
            <person name="Mongin E."/>
            <person name="Murphy S.D."/>
            <person name="O'Brochta D.A."/>
            <person name="Pfannkoch C."/>
            <person name="Qi R."/>
            <person name="Regier M.A."/>
            <person name="Remington K."/>
            <person name="Shao H."/>
            <person name="Sharakhova M.V."/>
            <person name="Sitter C.D."/>
            <person name="Shetty J."/>
            <person name="Smith T.J."/>
            <person name="Strong R."/>
            <person name="Sun J."/>
            <person name="Thomasova D."/>
            <person name="Ton L.Q."/>
            <person name="Topalis P."/>
            <person name="Tu Z.J."/>
            <person name="Unger M.F."/>
            <person name="Walenz B."/>
            <person name="Wang A.H."/>
            <person name="Wang J."/>
            <person name="Wang M."/>
            <person name="Wang X."/>
            <person name="Woodford K.J."/>
            <person name="Wortman J.R."/>
            <person name="Wu M."/>
            <person name="Yao A."/>
            <person name="Zdobnov E.M."/>
            <person name="Zhang H."/>
            <person name="Zhao Q."/>
            <person name="Zhao S."/>
            <person name="Zhu S.C."/>
            <person name="Zhimulev I."/>
            <person name="Coluzzi M."/>
            <person name="della Torre A."/>
            <person name="Roth C.W."/>
            <person name="Louis C."/>
            <person name="Kalush F."/>
            <person name="Mural R.J."/>
            <person name="Myers E.W."/>
            <person name="Adams M.D."/>
            <person name="Smith H.O."/>
            <person name="Broder S."/>
            <person name="Gardner M.J."/>
            <person name="Fraser C.M."/>
            <person name="Birney E."/>
            <person name="Bork P."/>
            <person name="Brey P.T."/>
            <person name="Venter J.C."/>
            <person name="Weissenbach J."/>
            <person name="Kafatos F.C."/>
            <person name="Collins F.H."/>
            <person name="Hoffman S.L."/>
        </authorList>
    </citation>
    <scope>NUCLEOTIDE SEQUENCE [LARGE SCALE GENOMIC DNA]</scope>
    <source>
        <strain>PEST</strain>
    </source>
</reference>
<accession>Q7QIL2</accession>
<feature type="chain" id="PRO_0000373909" description="Protein arginine N-methyltransferase 7">
    <location>
        <begin position="1"/>
        <end position="690"/>
    </location>
</feature>
<feature type="domain" description="SAM-dependent MTase PRMT-type 1" evidence="2">
    <location>
        <begin position="5"/>
        <end position="355"/>
    </location>
</feature>
<feature type="domain" description="SAM-dependent MTase PRMT-type 2" evidence="2">
    <location>
        <begin position="364"/>
        <end position="690"/>
    </location>
</feature>
<comment type="function">
    <text evidence="1">Essential arginine methyltransferase that can both catalyze the formation of omega-N monomethylarginine (MMA) and symmetrical dimethylarginine (sDMA). Specifically mediates the symmetrical dimethylation of arginine residues in the small nuclear ribonucleoproteins SmD1 and SmD3 (By similarity).</text>
</comment>
<comment type="similarity">
    <text evidence="2">Belongs to the class I-like SAM-binding methyltransferase superfamily. Protein arginine N-methyltransferase family. PRMT7 subfamily.</text>
</comment>
<evidence type="ECO:0000250" key="1"/>
<evidence type="ECO:0000255" key="2">
    <source>
        <dbReference type="PROSITE-ProRule" id="PRU01015"/>
    </source>
</evidence>
<protein>
    <recommendedName>
        <fullName>Protein arginine N-methyltransferase 7</fullName>
        <ecNumber>2.1.1.-</ecNumber>
    </recommendedName>
</protein>
<keyword id="KW-0489">Methyltransferase</keyword>
<keyword id="KW-1185">Reference proteome</keyword>
<keyword id="KW-0677">Repeat</keyword>
<keyword id="KW-0949">S-adenosyl-L-methionine</keyword>
<keyword id="KW-0808">Transferase</keyword>
<gene>
    <name type="primary">Art7</name>
    <name type="ORF">AGAP006938</name>
</gene>